<protein>
    <recommendedName>
        <fullName evidence="1">tRNA U34 carboxymethyltransferase</fullName>
        <ecNumber evidence="1">2.5.1.-</ecNumber>
    </recommendedName>
</protein>
<name>CMOB_HAEI8</name>
<dbReference type="EC" id="2.5.1.-" evidence="1"/>
<dbReference type="EMBL" id="CP000057">
    <property type="protein sequence ID" value="AAX88586.1"/>
    <property type="molecule type" value="Genomic_DNA"/>
</dbReference>
<dbReference type="RefSeq" id="WP_011272649.1">
    <property type="nucleotide sequence ID" value="NC_007146.2"/>
</dbReference>
<dbReference type="SMR" id="Q4QK61"/>
<dbReference type="GeneID" id="93220527"/>
<dbReference type="KEGG" id="hit:NTHI1815"/>
<dbReference type="HOGENOM" id="CLU_052665_0_0_6"/>
<dbReference type="Proteomes" id="UP000002525">
    <property type="component" value="Chromosome"/>
</dbReference>
<dbReference type="GO" id="GO:0008168">
    <property type="term" value="F:methyltransferase activity"/>
    <property type="evidence" value="ECO:0007669"/>
    <property type="project" value="TreeGrafter"/>
</dbReference>
<dbReference type="GO" id="GO:0016765">
    <property type="term" value="F:transferase activity, transferring alkyl or aryl (other than methyl) groups"/>
    <property type="evidence" value="ECO:0007669"/>
    <property type="project" value="UniProtKB-UniRule"/>
</dbReference>
<dbReference type="GO" id="GO:0002098">
    <property type="term" value="P:tRNA wobble uridine modification"/>
    <property type="evidence" value="ECO:0007669"/>
    <property type="project" value="InterPro"/>
</dbReference>
<dbReference type="CDD" id="cd02440">
    <property type="entry name" value="AdoMet_MTases"/>
    <property type="match status" value="1"/>
</dbReference>
<dbReference type="Gene3D" id="3.40.50.150">
    <property type="entry name" value="Vaccinia Virus protein VP39"/>
    <property type="match status" value="1"/>
</dbReference>
<dbReference type="HAMAP" id="MF_01590">
    <property type="entry name" value="tRNA_carboxymethyltr_CmoB"/>
    <property type="match status" value="1"/>
</dbReference>
<dbReference type="InterPro" id="IPR010017">
    <property type="entry name" value="CmoB"/>
</dbReference>
<dbReference type="InterPro" id="IPR027555">
    <property type="entry name" value="Mo5U34_MeTrfas-like"/>
</dbReference>
<dbReference type="InterPro" id="IPR029063">
    <property type="entry name" value="SAM-dependent_MTases_sf"/>
</dbReference>
<dbReference type="NCBIfam" id="NF011650">
    <property type="entry name" value="PRK15068.1"/>
    <property type="match status" value="1"/>
</dbReference>
<dbReference type="NCBIfam" id="TIGR00452">
    <property type="entry name" value="tRNA 5-methoxyuridine(34)/uridine 5-oxyacetic acid(34) synthase CmoB"/>
    <property type="match status" value="1"/>
</dbReference>
<dbReference type="PANTHER" id="PTHR43464">
    <property type="entry name" value="METHYLTRANSFERASE"/>
    <property type="match status" value="1"/>
</dbReference>
<dbReference type="PANTHER" id="PTHR43464:SF95">
    <property type="entry name" value="TRNA U34 CARBOXYMETHYLTRANSFERASE"/>
    <property type="match status" value="1"/>
</dbReference>
<dbReference type="Pfam" id="PF08003">
    <property type="entry name" value="Methyltransf_9"/>
    <property type="match status" value="1"/>
</dbReference>
<dbReference type="SUPFAM" id="SSF53335">
    <property type="entry name" value="S-adenosyl-L-methionine-dependent methyltransferases"/>
    <property type="match status" value="1"/>
</dbReference>
<sequence>MIDFRPFYQQIATTNLSDWLETLPLQLKEWETQTHGDYAKWSKIVDFLPDLHADEIDLKSAVKSDRTFPLSEGEKQRIIHHLKQLMPWRKGPYHLFGIHVDCEWRSDFKWDRVLPHLAPLQGRTILDVGCGSGYHMWRMVGEGAKMVVGIDPTELFLCQFEAVRKLLNNDRRANLIPLGIEQMQPLAAFDTVFSMGVLYHRKSPLDHLSQLKNQLVKGGELVLETLVVDGDVNTVLIPADRYAKMKNVYFIPSVAALINWLEKVGFTNVRCVDVATTTLEEQRKTDWLENESLIDFLDSNDHSKTIEGYQAPKRAVILANK</sequence>
<evidence type="ECO:0000255" key="1">
    <source>
        <dbReference type="HAMAP-Rule" id="MF_01590"/>
    </source>
</evidence>
<proteinExistence type="inferred from homology"/>
<comment type="function">
    <text evidence="1">Catalyzes carboxymethyl transfer from carboxy-S-adenosyl-L-methionine (Cx-SAM) to 5-hydroxyuridine (ho5U) to form 5-carboxymethoxyuridine (cmo5U) at position 34 in tRNAs.</text>
</comment>
<comment type="catalytic activity">
    <reaction evidence="1">
        <text>carboxy-S-adenosyl-L-methionine + 5-hydroxyuridine(34) in tRNA = 5-carboxymethoxyuridine(34) in tRNA + S-adenosyl-L-homocysteine + H(+)</text>
        <dbReference type="Rhea" id="RHEA:52848"/>
        <dbReference type="Rhea" id="RHEA-COMP:13381"/>
        <dbReference type="Rhea" id="RHEA-COMP:13383"/>
        <dbReference type="ChEBI" id="CHEBI:15378"/>
        <dbReference type="ChEBI" id="CHEBI:57856"/>
        <dbReference type="ChEBI" id="CHEBI:134278"/>
        <dbReference type="ChEBI" id="CHEBI:136877"/>
        <dbReference type="ChEBI" id="CHEBI:136879"/>
    </reaction>
</comment>
<comment type="subunit">
    <text evidence="1">Homotetramer.</text>
</comment>
<comment type="similarity">
    <text evidence="1">Belongs to the class I-like SAM-binding methyltransferase superfamily. CmoB family.</text>
</comment>
<keyword id="KW-0808">Transferase</keyword>
<keyword id="KW-0819">tRNA processing</keyword>
<reference key="1">
    <citation type="journal article" date="2005" name="J. Bacteriol.">
        <title>Genomic sequence of an otitis media isolate of nontypeable Haemophilus influenzae: comparative study with H. influenzae serotype d, strain KW20.</title>
        <authorList>
            <person name="Harrison A."/>
            <person name="Dyer D.W."/>
            <person name="Gillaspy A."/>
            <person name="Ray W.C."/>
            <person name="Mungur R."/>
            <person name="Carson M.B."/>
            <person name="Zhong H."/>
            <person name="Gipson J."/>
            <person name="Gipson M."/>
            <person name="Johnson L.S."/>
            <person name="Lewis L."/>
            <person name="Bakaletz L.O."/>
            <person name="Munson R.S. Jr."/>
        </authorList>
    </citation>
    <scope>NUCLEOTIDE SEQUENCE [LARGE SCALE GENOMIC DNA]</scope>
    <source>
        <strain>86-028NP</strain>
    </source>
</reference>
<feature type="chain" id="PRO_0000313922" description="tRNA U34 carboxymethyltransferase">
    <location>
        <begin position="1"/>
        <end position="321"/>
    </location>
</feature>
<feature type="binding site" evidence="1">
    <location>
        <position position="90"/>
    </location>
    <ligand>
        <name>carboxy-S-adenosyl-L-methionine</name>
        <dbReference type="ChEBI" id="CHEBI:134278"/>
    </ligand>
</feature>
<feature type="binding site" evidence="1">
    <location>
        <position position="104"/>
    </location>
    <ligand>
        <name>carboxy-S-adenosyl-L-methionine</name>
        <dbReference type="ChEBI" id="CHEBI:134278"/>
    </ligand>
</feature>
<feature type="binding site" evidence="1">
    <location>
        <position position="109"/>
    </location>
    <ligand>
        <name>carboxy-S-adenosyl-L-methionine</name>
        <dbReference type="ChEBI" id="CHEBI:134278"/>
    </ligand>
</feature>
<feature type="binding site" evidence="1">
    <location>
        <position position="129"/>
    </location>
    <ligand>
        <name>carboxy-S-adenosyl-L-methionine</name>
        <dbReference type="ChEBI" id="CHEBI:134278"/>
    </ligand>
</feature>
<feature type="binding site" evidence="1">
    <location>
        <begin position="151"/>
        <end position="153"/>
    </location>
    <ligand>
        <name>carboxy-S-adenosyl-L-methionine</name>
        <dbReference type="ChEBI" id="CHEBI:134278"/>
    </ligand>
</feature>
<feature type="binding site" evidence="1">
    <location>
        <begin position="180"/>
        <end position="181"/>
    </location>
    <ligand>
        <name>carboxy-S-adenosyl-L-methionine</name>
        <dbReference type="ChEBI" id="CHEBI:134278"/>
    </ligand>
</feature>
<feature type="binding site" evidence="1">
    <location>
        <position position="195"/>
    </location>
    <ligand>
        <name>carboxy-S-adenosyl-L-methionine</name>
        <dbReference type="ChEBI" id="CHEBI:134278"/>
    </ligand>
</feature>
<feature type="binding site" evidence="1">
    <location>
        <position position="199"/>
    </location>
    <ligand>
        <name>carboxy-S-adenosyl-L-methionine</name>
        <dbReference type="ChEBI" id="CHEBI:134278"/>
    </ligand>
</feature>
<feature type="binding site" evidence="1">
    <location>
        <position position="314"/>
    </location>
    <ligand>
        <name>carboxy-S-adenosyl-L-methionine</name>
        <dbReference type="ChEBI" id="CHEBI:134278"/>
    </ligand>
</feature>
<organism>
    <name type="scientific">Haemophilus influenzae (strain 86-028NP)</name>
    <dbReference type="NCBI Taxonomy" id="281310"/>
    <lineage>
        <taxon>Bacteria</taxon>
        <taxon>Pseudomonadati</taxon>
        <taxon>Pseudomonadota</taxon>
        <taxon>Gammaproteobacteria</taxon>
        <taxon>Pasteurellales</taxon>
        <taxon>Pasteurellaceae</taxon>
        <taxon>Haemophilus</taxon>
    </lineage>
</organism>
<gene>
    <name evidence="1" type="primary">cmoB</name>
    <name type="ordered locus">NTHI1815</name>
</gene>
<accession>Q4QK61</accession>